<evidence type="ECO:0000255" key="1">
    <source>
        <dbReference type="HAMAP-Rule" id="MF_01337"/>
    </source>
</evidence>
<evidence type="ECO:0000305" key="2"/>
<organism>
    <name type="scientific">Leuconostoc citreum (strain KM20)</name>
    <dbReference type="NCBI Taxonomy" id="349519"/>
    <lineage>
        <taxon>Bacteria</taxon>
        <taxon>Bacillati</taxon>
        <taxon>Bacillota</taxon>
        <taxon>Bacilli</taxon>
        <taxon>Lactobacillales</taxon>
        <taxon>Lactobacillaceae</taxon>
        <taxon>Leuconostoc</taxon>
    </lineage>
</organism>
<keyword id="KW-1185">Reference proteome</keyword>
<keyword id="KW-0687">Ribonucleoprotein</keyword>
<keyword id="KW-0689">Ribosomal protein</keyword>
<keyword id="KW-0694">RNA-binding</keyword>
<keyword id="KW-0699">rRNA-binding</keyword>
<accession>B1MVZ9</accession>
<protein>
    <recommendedName>
        <fullName evidence="1">Large ribosomal subunit protein uL18</fullName>
    </recommendedName>
    <alternativeName>
        <fullName evidence="2">50S ribosomal protein L18</fullName>
    </alternativeName>
</protein>
<sequence>MISKPDKNKLRVKRHKRVRGKISGTAARPRLNVFRSNANIYAQLIDDVAGVTLASASSHDAEVSGTKTEQATKVGELIATRGKAAGFEDVIFDRGGYLYHGRVQALAESARENGLKF</sequence>
<proteinExistence type="inferred from homology"/>
<dbReference type="EMBL" id="DQ489736">
    <property type="protein sequence ID" value="ACA83403.1"/>
    <property type="molecule type" value="Genomic_DNA"/>
</dbReference>
<dbReference type="RefSeq" id="WP_004899440.1">
    <property type="nucleotide sequence ID" value="NC_010471.1"/>
</dbReference>
<dbReference type="SMR" id="B1MVZ9"/>
<dbReference type="STRING" id="349519.LCK_01580"/>
<dbReference type="GeneID" id="61103256"/>
<dbReference type="KEGG" id="lci:LCK_01580"/>
<dbReference type="eggNOG" id="COG0256">
    <property type="taxonomic scope" value="Bacteria"/>
</dbReference>
<dbReference type="HOGENOM" id="CLU_098841_0_1_9"/>
<dbReference type="OrthoDB" id="9810939at2"/>
<dbReference type="Proteomes" id="UP000002166">
    <property type="component" value="Chromosome"/>
</dbReference>
<dbReference type="GO" id="GO:0022625">
    <property type="term" value="C:cytosolic large ribosomal subunit"/>
    <property type="evidence" value="ECO:0007669"/>
    <property type="project" value="TreeGrafter"/>
</dbReference>
<dbReference type="GO" id="GO:0008097">
    <property type="term" value="F:5S rRNA binding"/>
    <property type="evidence" value="ECO:0007669"/>
    <property type="project" value="TreeGrafter"/>
</dbReference>
<dbReference type="GO" id="GO:0003735">
    <property type="term" value="F:structural constituent of ribosome"/>
    <property type="evidence" value="ECO:0007669"/>
    <property type="project" value="InterPro"/>
</dbReference>
<dbReference type="GO" id="GO:0006412">
    <property type="term" value="P:translation"/>
    <property type="evidence" value="ECO:0007669"/>
    <property type="project" value="UniProtKB-UniRule"/>
</dbReference>
<dbReference type="CDD" id="cd00432">
    <property type="entry name" value="Ribosomal_L18_L5e"/>
    <property type="match status" value="1"/>
</dbReference>
<dbReference type="FunFam" id="3.30.420.100:FF:000001">
    <property type="entry name" value="50S ribosomal protein L18"/>
    <property type="match status" value="1"/>
</dbReference>
<dbReference type="Gene3D" id="3.30.420.100">
    <property type="match status" value="1"/>
</dbReference>
<dbReference type="HAMAP" id="MF_01337_B">
    <property type="entry name" value="Ribosomal_uL18_B"/>
    <property type="match status" value="1"/>
</dbReference>
<dbReference type="InterPro" id="IPR004389">
    <property type="entry name" value="Ribosomal_uL18_bac-type"/>
</dbReference>
<dbReference type="InterPro" id="IPR005484">
    <property type="entry name" value="Ribosomal_uL18_bac/euk"/>
</dbReference>
<dbReference type="NCBIfam" id="TIGR00060">
    <property type="entry name" value="L18_bact"/>
    <property type="match status" value="1"/>
</dbReference>
<dbReference type="PANTHER" id="PTHR12899">
    <property type="entry name" value="39S RIBOSOMAL PROTEIN L18, MITOCHONDRIAL"/>
    <property type="match status" value="1"/>
</dbReference>
<dbReference type="PANTHER" id="PTHR12899:SF3">
    <property type="entry name" value="LARGE RIBOSOMAL SUBUNIT PROTEIN UL18M"/>
    <property type="match status" value="1"/>
</dbReference>
<dbReference type="Pfam" id="PF00861">
    <property type="entry name" value="Ribosomal_L18p"/>
    <property type="match status" value="1"/>
</dbReference>
<dbReference type="SUPFAM" id="SSF53137">
    <property type="entry name" value="Translational machinery components"/>
    <property type="match status" value="1"/>
</dbReference>
<comment type="function">
    <text evidence="1">This is one of the proteins that bind and probably mediate the attachment of the 5S RNA into the large ribosomal subunit, where it forms part of the central protuberance.</text>
</comment>
<comment type="subunit">
    <text evidence="1">Part of the 50S ribosomal subunit; part of the 5S rRNA/L5/L18/L25 subcomplex. Contacts the 5S and 23S rRNAs.</text>
</comment>
<comment type="similarity">
    <text evidence="1">Belongs to the universal ribosomal protein uL18 family.</text>
</comment>
<name>RL18_LEUCK</name>
<reference key="1">
    <citation type="journal article" date="2008" name="J. Bacteriol.">
        <title>Complete genome sequence of Leuconostoc citreum KM20.</title>
        <authorList>
            <person name="Kim J.F."/>
            <person name="Jeong H."/>
            <person name="Lee J.-S."/>
            <person name="Choi S.-H."/>
            <person name="Ha M."/>
            <person name="Hur C.-G."/>
            <person name="Kim J.-S."/>
            <person name="Lee S."/>
            <person name="Park H.-S."/>
            <person name="Park Y.-H."/>
            <person name="Oh T.K."/>
        </authorList>
    </citation>
    <scope>NUCLEOTIDE SEQUENCE [LARGE SCALE GENOMIC DNA]</scope>
    <source>
        <strain>KM20</strain>
    </source>
</reference>
<gene>
    <name evidence="1" type="primary">rplR</name>
    <name type="ordered locus">LCK_01580</name>
</gene>
<feature type="chain" id="PRO_1000142685" description="Large ribosomal subunit protein uL18">
    <location>
        <begin position="1"/>
        <end position="117"/>
    </location>
</feature>